<keyword id="KW-0030">Aminoacyl-tRNA synthetase</keyword>
<keyword id="KW-0067">ATP-binding</keyword>
<keyword id="KW-0963">Cytoplasm</keyword>
<keyword id="KW-0436">Ligase</keyword>
<keyword id="KW-0547">Nucleotide-binding</keyword>
<keyword id="KW-0648">Protein biosynthesis</keyword>
<comment type="catalytic activity">
    <reaction evidence="1">
        <text>tRNA(Leu) + L-leucine + ATP = L-leucyl-tRNA(Leu) + AMP + diphosphate</text>
        <dbReference type="Rhea" id="RHEA:11688"/>
        <dbReference type="Rhea" id="RHEA-COMP:9613"/>
        <dbReference type="Rhea" id="RHEA-COMP:9622"/>
        <dbReference type="ChEBI" id="CHEBI:30616"/>
        <dbReference type="ChEBI" id="CHEBI:33019"/>
        <dbReference type="ChEBI" id="CHEBI:57427"/>
        <dbReference type="ChEBI" id="CHEBI:78442"/>
        <dbReference type="ChEBI" id="CHEBI:78494"/>
        <dbReference type="ChEBI" id="CHEBI:456215"/>
        <dbReference type="EC" id="6.1.1.4"/>
    </reaction>
</comment>
<comment type="subcellular location">
    <subcellularLocation>
        <location evidence="1">Cytoplasm</location>
    </subcellularLocation>
</comment>
<comment type="similarity">
    <text evidence="1">Belongs to the class-I aminoacyl-tRNA synthetase family.</text>
</comment>
<evidence type="ECO:0000255" key="1">
    <source>
        <dbReference type="HAMAP-Rule" id="MF_00049"/>
    </source>
</evidence>
<protein>
    <recommendedName>
        <fullName evidence="1">Leucine--tRNA ligase</fullName>
        <ecNumber evidence="1">6.1.1.4</ecNumber>
    </recommendedName>
    <alternativeName>
        <fullName evidence="1">Leucyl-tRNA synthetase</fullName>
        <shortName evidence="1">LeuRS</shortName>
    </alternativeName>
</protein>
<reference key="1">
    <citation type="journal article" date="2005" name="Jpn. Agric. Res. Q.">
        <title>Genome sequence of Xanthomonas oryzae pv. oryzae suggests contribution of large numbers of effector genes and insertion sequences to its race diversity.</title>
        <authorList>
            <person name="Ochiai H."/>
            <person name="Inoue Y."/>
            <person name="Takeya M."/>
            <person name="Sasaki A."/>
            <person name="Kaku H."/>
        </authorList>
    </citation>
    <scope>NUCLEOTIDE SEQUENCE [LARGE SCALE GENOMIC DNA]</scope>
    <source>
        <strain>MAFF 311018</strain>
    </source>
</reference>
<gene>
    <name evidence="1" type="primary">leuS</name>
    <name type="ordered locus">XOO3142</name>
</gene>
<accession>Q2P0N0</accession>
<sequence length="880" mass="98457">MSTVEPNVYDPHQVETSAQQFWDATRAFQVDESSEKPKFYCLSMLPYPSGALHMGHVRNYTISDVVSRYKRMTGHNVLQPMGWDAFGLPAENAAIKNKTAPAKWTYANIAHMRAQLKSLGYAIDWSREFATCTPDYYVHEQRMFTRLMRKGLAYRRNAVVNWDPIDQTVLANEQVIDGRGWRSGAVVEKREIPQWFLRITDYAQELLDGLDQLDGWPDSVKTMQRNWIGRSEGLEIQFDVRDTNGAALDPLRVFTTRPDTLMGVTFVSIAAEHPLALHAAKSNPELAALLETLKHGGVSEAELETQEKRGMATGLTAVHPISGEQVPVWVANFVLMGYGTGAVMAVPGHDQRDFEFANKYGLPIVQVVKLREPRNDDEQRWDATEWRDWYTDKSRELELINSAEFDGLDFGGAFEALAERFERKGQGQRRVNYRLRDWGVSRQRYWGCPIPVIYCPKCGAVPVPEDQLPVVLPENVEFACTGSPIKTDPTWRQTTCPDCGGPAERETDTFDTFMESSWYVARYTSPNAREMVDRRANYWMPADLYVGGIEHAILHLMYFRFYHKLMRDARLVDSDEPVTNLLTQGMVIADTFYRDADNGGKDWINPADVEIQRDERGRVTGAVLIADGQPVHIGGTEKMSKSKNNGVDPQSMVAKYGADTVRLFSMFAAPPEQSLEWNEAGVDGMARFMRRLWAQVHKHVGEGAAVALDVAALSAEQKAIRRKTHETIGKVSDDYGRRHSFNTAIAAVMELSNALAKFDDASDQGRAVRQEALEAMVLLLNPITPHASHALWQVLGRGETLLENVAFPQADVSALVRDALTLAVQINGKLRGTIDVAADAAREQIEALAQAEPNAAKFLDGLSVRKIIIVPGKIVNIVAG</sequence>
<name>SYL_XANOM</name>
<dbReference type="EC" id="6.1.1.4" evidence="1"/>
<dbReference type="EMBL" id="AP008229">
    <property type="protein sequence ID" value="BAE69897.1"/>
    <property type="molecule type" value="Genomic_DNA"/>
</dbReference>
<dbReference type="RefSeq" id="WP_011409106.1">
    <property type="nucleotide sequence ID" value="NC_007705.1"/>
</dbReference>
<dbReference type="SMR" id="Q2P0N0"/>
<dbReference type="KEGG" id="xom:XOO3142"/>
<dbReference type="HOGENOM" id="CLU_004427_0_0_6"/>
<dbReference type="GO" id="GO:0005829">
    <property type="term" value="C:cytosol"/>
    <property type="evidence" value="ECO:0007669"/>
    <property type="project" value="TreeGrafter"/>
</dbReference>
<dbReference type="GO" id="GO:0002161">
    <property type="term" value="F:aminoacyl-tRNA deacylase activity"/>
    <property type="evidence" value="ECO:0007669"/>
    <property type="project" value="InterPro"/>
</dbReference>
<dbReference type="GO" id="GO:0005524">
    <property type="term" value="F:ATP binding"/>
    <property type="evidence" value="ECO:0007669"/>
    <property type="project" value="UniProtKB-UniRule"/>
</dbReference>
<dbReference type="GO" id="GO:0004823">
    <property type="term" value="F:leucine-tRNA ligase activity"/>
    <property type="evidence" value="ECO:0007669"/>
    <property type="project" value="UniProtKB-UniRule"/>
</dbReference>
<dbReference type="GO" id="GO:0006429">
    <property type="term" value="P:leucyl-tRNA aminoacylation"/>
    <property type="evidence" value="ECO:0007669"/>
    <property type="project" value="UniProtKB-UniRule"/>
</dbReference>
<dbReference type="CDD" id="cd07958">
    <property type="entry name" value="Anticodon_Ia_Leu_BEm"/>
    <property type="match status" value="1"/>
</dbReference>
<dbReference type="CDD" id="cd00812">
    <property type="entry name" value="LeuRS_core"/>
    <property type="match status" value="1"/>
</dbReference>
<dbReference type="FunFam" id="1.10.730.10:FF:000003">
    <property type="entry name" value="Leucine--tRNA ligase"/>
    <property type="match status" value="1"/>
</dbReference>
<dbReference type="FunFam" id="2.20.28.290:FF:000001">
    <property type="entry name" value="Leucine--tRNA ligase"/>
    <property type="match status" value="1"/>
</dbReference>
<dbReference type="FunFam" id="3.10.20.590:FF:000001">
    <property type="entry name" value="Leucine--tRNA ligase"/>
    <property type="match status" value="1"/>
</dbReference>
<dbReference type="FunFam" id="3.40.50.620:FF:000003">
    <property type="entry name" value="Leucine--tRNA ligase"/>
    <property type="match status" value="1"/>
</dbReference>
<dbReference type="FunFam" id="3.40.50.620:FF:000056">
    <property type="entry name" value="Leucine--tRNA ligase"/>
    <property type="match status" value="1"/>
</dbReference>
<dbReference type="FunFam" id="3.90.740.10:FF:000012">
    <property type="entry name" value="Leucine--tRNA ligase"/>
    <property type="match status" value="1"/>
</dbReference>
<dbReference type="Gene3D" id="2.20.28.290">
    <property type="match status" value="1"/>
</dbReference>
<dbReference type="Gene3D" id="3.10.20.590">
    <property type="match status" value="1"/>
</dbReference>
<dbReference type="Gene3D" id="3.40.50.620">
    <property type="entry name" value="HUPs"/>
    <property type="match status" value="2"/>
</dbReference>
<dbReference type="Gene3D" id="1.10.730.10">
    <property type="entry name" value="Isoleucyl-tRNA Synthetase, Domain 1"/>
    <property type="match status" value="2"/>
</dbReference>
<dbReference type="Gene3D" id="3.90.740.10">
    <property type="entry name" value="Valyl/Leucyl/Isoleucyl-tRNA synthetase, editing domain"/>
    <property type="match status" value="1"/>
</dbReference>
<dbReference type="HAMAP" id="MF_00049_B">
    <property type="entry name" value="Leu_tRNA_synth_B"/>
    <property type="match status" value="1"/>
</dbReference>
<dbReference type="InterPro" id="IPR001412">
    <property type="entry name" value="aa-tRNA-synth_I_CS"/>
</dbReference>
<dbReference type="InterPro" id="IPR002300">
    <property type="entry name" value="aa-tRNA-synth_Ia"/>
</dbReference>
<dbReference type="InterPro" id="IPR002302">
    <property type="entry name" value="Leu-tRNA-ligase"/>
</dbReference>
<dbReference type="InterPro" id="IPR025709">
    <property type="entry name" value="Leu_tRNA-synth_edit"/>
</dbReference>
<dbReference type="InterPro" id="IPR013155">
    <property type="entry name" value="M/V/L/I-tRNA-synth_anticd-bd"/>
</dbReference>
<dbReference type="InterPro" id="IPR015413">
    <property type="entry name" value="Methionyl/Leucyl_tRNA_Synth"/>
</dbReference>
<dbReference type="InterPro" id="IPR014729">
    <property type="entry name" value="Rossmann-like_a/b/a_fold"/>
</dbReference>
<dbReference type="InterPro" id="IPR009080">
    <property type="entry name" value="tRNAsynth_Ia_anticodon-bd"/>
</dbReference>
<dbReference type="InterPro" id="IPR009008">
    <property type="entry name" value="Val/Leu/Ile-tRNA-synth_edit"/>
</dbReference>
<dbReference type="NCBIfam" id="TIGR00396">
    <property type="entry name" value="leuS_bact"/>
    <property type="match status" value="1"/>
</dbReference>
<dbReference type="PANTHER" id="PTHR43740:SF2">
    <property type="entry name" value="LEUCINE--TRNA LIGASE, MITOCHONDRIAL"/>
    <property type="match status" value="1"/>
</dbReference>
<dbReference type="PANTHER" id="PTHR43740">
    <property type="entry name" value="LEUCYL-TRNA SYNTHETASE"/>
    <property type="match status" value="1"/>
</dbReference>
<dbReference type="Pfam" id="PF08264">
    <property type="entry name" value="Anticodon_1"/>
    <property type="match status" value="1"/>
</dbReference>
<dbReference type="Pfam" id="PF00133">
    <property type="entry name" value="tRNA-synt_1"/>
    <property type="match status" value="2"/>
</dbReference>
<dbReference type="Pfam" id="PF13603">
    <property type="entry name" value="tRNA-synt_1_2"/>
    <property type="match status" value="1"/>
</dbReference>
<dbReference type="Pfam" id="PF09334">
    <property type="entry name" value="tRNA-synt_1g"/>
    <property type="match status" value="1"/>
</dbReference>
<dbReference type="PRINTS" id="PR00985">
    <property type="entry name" value="TRNASYNTHLEU"/>
</dbReference>
<dbReference type="SUPFAM" id="SSF47323">
    <property type="entry name" value="Anticodon-binding domain of a subclass of class I aminoacyl-tRNA synthetases"/>
    <property type="match status" value="1"/>
</dbReference>
<dbReference type="SUPFAM" id="SSF52374">
    <property type="entry name" value="Nucleotidylyl transferase"/>
    <property type="match status" value="1"/>
</dbReference>
<dbReference type="SUPFAM" id="SSF50677">
    <property type="entry name" value="ValRS/IleRS/LeuRS editing domain"/>
    <property type="match status" value="1"/>
</dbReference>
<dbReference type="PROSITE" id="PS00178">
    <property type="entry name" value="AA_TRNA_LIGASE_I"/>
    <property type="match status" value="1"/>
</dbReference>
<organism>
    <name type="scientific">Xanthomonas oryzae pv. oryzae (strain MAFF 311018)</name>
    <dbReference type="NCBI Taxonomy" id="342109"/>
    <lineage>
        <taxon>Bacteria</taxon>
        <taxon>Pseudomonadati</taxon>
        <taxon>Pseudomonadota</taxon>
        <taxon>Gammaproteobacteria</taxon>
        <taxon>Lysobacterales</taxon>
        <taxon>Lysobacteraceae</taxon>
        <taxon>Xanthomonas</taxon>
    </lineage>
</organism>
<feature type="chain" id="PRO_1000009465" description="Leucine--tRNA ligase">
    <location>
        <begin position="1"/>
        <end position="880"/>
    </location>
</feature>
<feature type="short sequence motif" description="'HIGH' region">
    <location>
        <begin position="46"/>
        <end position="56"/>
    </location>
</feature>
<feature type="short sequence motif" description="'KMSKS' region">
    <location>
        <begin position="638"/>
        <end position="642"/>
    </location>
</feature>
<feature type="binding site" evidence="1">
    <location>
        <position position="641"/>
    </location>
    <ligand>
        <name>ATP</name>
        <dbReference type="ChEBI" id="CHEBI:30616"/>
    </ligand>
</feature>
<proteinExistence type="inferred from homology"/>